<dbReference type="EMBL" id="AF156172">
    <property type="protein sequence ID" value="AAF29465.1"/>
    <property type="molecule type" value="mRNA"/>
</dbReference>
<dbReference type="SMR" id="Q9NJC4"/>
<dbReference type="GO" id="GO:0005576">
    <property type="term" value="C:extracellular region"/>
    <property type="evidence" value="ECO:0007669"/>
    <property type="project" value="UniProtKB-SubCell"/>
</dbReference>
<dbReference type="GO" id="GO:0019871">
    <property type="term" value="F:sodium channel inhibitor activity"/>
    <property type="evidence" value="ECO:0007669"/>
    <property type="project" value="InterPro"/>
</dbReference>
<dbReference type="GO" id="GO:0090729">
    <property type="term" value="F:toxin activity"/>
    <property type="evidence" value="ECO:0007669"/>
    <property type="project" value="UniProtKB-KW"/>
</dbReference>
<dbReference type="GO" id="GO:0006952">
    <property type="term" value="P:defense response"/>
    <property type="evidence" value="ECO:0007669"/>
    <property type="project" value="InterPro"/>
</dbReference>
<dbReference type="CDD" id="cd23106">
    <property type="entry name" value="neurotoxins_LC_scorpion"/>
    <property type="match status" value="1"/>
</dbReference>
<dbReference type="FunFam" id="3.30.30.10:FF:000002">
    <property type="entry name" value="Alpha-like toxin BmK-M1"/>
    <property type="match status" value="1"/>
</dbReference>
<dbReference type="Gene3D" id="3.30.30.10">
    <property type="entry name" value="Knottin, scorpion toxin-like"/>
    <property type="match status" value="1"/>
</dbReference>
<dbReference type="InterPro" id="IPR044062">
    <property type="entry name" value="LCN-type_CS_alpha_beta_dom"/>
</dbReference>
<dbReference type="InterPro" id="IPR003614">
    <property type="entry name" value="Scorpion_toxin-like"/>
</dbReference>
<dbReference type="InterPro" id="IPR036574">
    <property type="entry name" value="Scorpion_toxin-like_sf"/>
</dbReference>
<dbReference type="InterPro" id="IPR018218">
    <property type="entry name" value="Scorpion_toxinL"/>
</dbReference>
<dbReference type="InterPro" id="IPR002061">
    <property type="entry name" value="Scorpion_toxinL/defensin"/>
</dbReference>
<dbReference type="Pfam" id="PF00537">
    <property type="entry name" value="Toxin_3"/>
    <property type="match status" value="1"/>
</dbReference>
<dbReference type="PRINTS" id="PR00285">
    <property type="entry name" value="SCORPNTOXIN"/>
</dbReference>
<dbReference type="SMART" id="SM00505">
    <property type="entry name" value="Knot1"/>
    <property type="match status" value="1"/>
</dbReference>
<dbReference type="SUPFAM" id="SSF57095">
    <property type="entry name" value="Scorpion toxin-like"/>
    <property type="match status" value="1"/>
</dbReference>
<dbReference type="PROSITE" id="PS51863">
    <property type="entry name" value="LCN_CSAB"/>
    <property type="match status" value="1"/>
</dbReference>
<accession>Q9NJC4</accession>
<keyword id="KW-1015">Disulfide bond</keyword>
<keyword id="KW-0872">Ion channel impairing toxin</keyword>
<keyword id="KW-0528">Neurotoxin</keyword>
<keyword id="KW-0964">Secreted</keyword>
<keyword id="KW-0732">Signal</keyword>
<keyword id="KW-0800">Toxin</keyword>
<keyword id="KW-0738">Voltage-gated sodium channel impairing toxin</keyword>
<proteinExistence type="evidence at transcript level"/>
<organism>
    <name type="scientific">Olivierus martensii</name>
    <name type="common">Manchurian scorpion</name>
    <name type="synonym">Mesobuthus martensii</name>
    <dbReference type="NCBI Taxonomy" id="34649"/>
    <lineage>
        <taxon>Eukaryota</taxon>
        <taxon>Metazoa</taxon>
        <taxon>Ecdysozoa</taxon>
        <taxon>Arthropoda</taxon>
        <taxon>Chelicerata</taxon>
        <taxon>Arachnida</taxon>
        <taxon>Scorpiones</taxon>
        <taxon>Buthida</taxon>
        <taxon>Buthoidea</taxon>
        <taxon>Buthidae</taxon>
        <taxon>Olivierus</taxon>
    </lineage>
</organism>
<name>SC17_OLIMR</name>
<comment type="function">
    <text evidence="1">Alpha toxins bind voltage-independently at site-3 of sodium channels (Nav) and inhibit the inactivation of the activated channels, thereby blocking neuronal transmission.</text>
</comment>
<comment type="subcellular location">
    <subcellularLocation>
        <location>Secreted</location>
    </subcellularLocation>
</comment>
<comment type="tissue specificity">
    <text>Expressed by the venom gland.</text>
</comment>
<comment type="domain">
    <text evidence="3">Has the structural arrangement of an alpha-helix connected to antiparallel beta-sheets by disulfide bonds (CS-alpha/beta).</text>
</comment>
<comment type="similarity">
    <text evidence="3">Belongs to the long (4 C-C) scorpion toxin superfamily. Sodium channel inhibitor family. Alpha subfamily.</text>
</comment>
<feature type="signal peptide" evidence="1">
    <location>
        <begin position="1" status="less than"/>
        <end position="8"/>
    </location>
</feature>
<feature type="chain" id="PRO_0000035253" description="Toxin BmKaTx17">
    <location>
        <begin position="9"/>
        <end position="72"/>
    </location>
</feature>
<feature type="propeptide" id="PRO_0000035254" description="Removed by a carboxypeptidase" evidence="3">
    <location>
        <begin position="73"/>
        <end position="74"/>
    </location>
</feature>
<feature type="domain" description="LCN-type CS-alpha/beta" evidence="2">
    <location>
        <begin position="10"/>
        <end position="72"/>
    </location>
</feature>
<feature type="disulfide bond" evidence="2">
    <location>
        <begin position="20"/>
        <end position="71"/>
    </location>
</feature>
<feature type="disulfide bond" evidence="2">
    <location>
        <begin position="24"/>
        <end position="44"/>
    </location>
</feature>
<feature type="disulfide bond" evidence="2">
    <location>
        <begin position="30"/>
        <end position="54"/>
    </location>
</feature>
<feature type="disulfide bond" evidence="2">
    <location>
        <begin position="34"/>
        <end position="56"/>
    </location>
</feature>
<feature type="non-terminal residue">
    <location>
        <position position="1"/>
    </location>
</feature>
<sequence>LLMTGVESGRDAYIAKNYNCVYHCFRDDYCNGLCTENGADSGYCYLAGKYGNACWCINLPDDKPIRIPGKCHRR</sequence>
<protein>
    <recommendedName>
        <fullName>Toxin BmKaTx17</fullName>
    </recommendedName>
    <alternativeName>
        <fullName>Alpha-neurotoxin Tx17</fullName>
    </alternativeName>
    <alternativeName>
        <fullName>BmKalphaTx17</fullName>
    </alternativeName>
</protein>
<reference key="1">
    <citation type="journal article" date="2000" name="Toxicon">
        <title>Nine novel precursors of Buthus martensii scorpion alpha-toxin homologues.</title>
        <authorList>
            <person name="Zhu S.-Y."/>
            <person name="Li W.-X."/>
            <person name="Zeng X.-C."/>
            <person name="Liu H."/>
            <person name="Jiang D.-H."/>
            <person name="Mao X."/>
        </authorList>
    </citation>
    <scope>NUCLEOTIDE SEQUENCE [MRNA]</scope>
    <source>
        <tissue>Venom gland</tissue>
    </source>
</reference>
<evidence type="ECO:0000250" key="1"/>
<evidence type="ECO:0000255" key="2">
    <source>
        <dbReference type="PROSITE-ProRule" id="PRU01210"/>
    </source>
</evidence>
<evidence type="ECO:0000305" key="3"/>